<evidence type="ECO:0000255" key="1">
    <source>
        <dbReference type="HAMAP-Rule" id="MF_00017"/>
    </source>
</evidence>
<proteinExistence type="inferred from homology"/>
<keyword id="KW-0227">DNA damage</keyword>
<keyword id="KW-0233">DNA recombination</keyword>
<keyword id="KW-0234">DNA repair</keyword>
<keyword id="KW-0479">Metal-binding</keyword>
<keyword id="KW-0862">Zinc</keyword>
<keyword id="KW-0863">Zinc-finger</keyword>
<name>RECR_LEGPL</name>
<reference key="1">
    <citation type="journal article" date="2004" name="Nat. Genet.">
        <title>Evidence in the Legionella pneumophila genome for exploitation of host cell functions and high genome plasticity.</title>
        <authorList>
            <person name="Cazalet C."/>
            <person name="Rusniok C."/>
            <person name="Brueggemann H."/>
            <person name="Zidane N."/>
            <person name="Magnier A."/>
            <person name="Ma L."/>
            <person name="Tichit M."/>
            <person name="Jarraud S."/>
            <person name="Bouchier C."/>
            <person name="Vandenesch F."/>
            <person name="Kunst F."/>
            <person name="Etienne J."/>
            <person name="Glaser P."/>
            <person name="Buchrieser C."/>
        </authorList>
    </citation>
    <scope>NUCLEOTIDE SEQUENCE [LARGE SCALE GENOMIC DNA]</scope>
    <source>
        <strain>Lens</strain>
    </source>
</reference>
<organism>
    <name type="scientific">Legionella pneumophila (strain Lens)</name>
    <dbReference type="NCBI Taxonomy" id="297245"/>
    <lineage>
        <taxon>Bacteria</taxon>
        <taxon>Pseudomonadati</taxon>
        <taxon>Pseudomonadota</taxon>
        <taxon>Gammaproteobacteria</taxon>
        <taxon>Legionellales</taxon>
        <taxon>Legionellaceae</taxon>
        <taxon>Legionella</taxon>
    </lineage>
</organism>
<accession>Q5WT52</accession>
<feature type="chain" id="PRO_0000190339" description="Recombination protein RecR">
    <location>
        <begin position="1"/>
        <end position="197"/>
    </location>
</feature>
<feature type="domain" description="Toprim" evidence="1">
    <location>
        <begin position="77"/>
        <end position="172"/>
    </location>
</feature>
<feature type="zinc finger region" description="C4-type" evidence="1">
    <location>
        <begin position="54"/>
        <end position="69"/>
    </location>
</feature>
<gene>
    <name evidence="1" type="primary">recR</name>
    <name type="ordered locus">lpl2673</name>
</gene>
<dbReference type="EMBL" id="CR628337">
    <property type="protein sequence ID" value="CAH16914.1"/>
    <property type="molecule type" value="Genomic_DNA"/>
</dbReference>
<dbReference type="RefSeq" id="WP_011216607.1">
    <property type="nucleotide sequence ID" value="NC_006369.1"/>
</dbReference>
<dbReference type="SMR" id="Q5WT52"/>
<dbReference type="KEGG" id="lpf:lpl2673"/>
<dbReference type="LegioList" id="lpl2673"/>
<dbReference type="HOGENOM" id="CLU_060739_1_2_6"/>
<dbReference type="Proteomes" id="UP000002517">
    <property type="component" value="Chromosome"/>
</dbReference>
<dbReference type="GO" id="GO:0003677">
    <property type="term" value="F:DNA binding"/>
    <property type="evidence" value="ECO:0007669"/>
    <property type="project" value="UniProtKB-UniRule"/>
</dbReference>
<dbReference type="GO" id="GO:0008270">
    <property type="term" value="F:zinc ion binding"/>
    <property type="evidence" value="ECO:0007669"/>
    <property type="project" value="UniProtKB-KW"/>
</dbReference>
<dbReference type="GO" id="GO:0006310">
    <property type="term" value="P:DNA recombination"/>
    <property type="evidence" value="ECO:0007669"/>
    <property type="project" value="UniProtKB-UniRule"/>
</dbReference>
<dbReference type="GO" id="GO:0006281">
    <property type="term" value="P:DNA repair"/>
    <property type="evidence" value="ECO:0007669"/>
    <property type="project" value="UniProtKB-UniRule"/>
</dbReference>
<dbReference type="CDD" id="cd01025">
    <property type="entry name" value="TOPRIM_recR"/>
    <property type="match status" value="1"/>
</dbReference>
<dbReference type="Gene3D" id="3.40.1360.10">
    <property type="match status" value="1"/>
</dbReference>
<dbReference type="Gene3D" id="1.10.8.420">
    <property type="entry name" value="RecR Domain 1"/>
    <property type="match status" value="1"/>
</dbReference>
<dbReference type="HAMAP" id="MF_00017">
    <property type="entry name" value="RecR"/>
    <property type="match status" value="1"/>
</dbReference>
<dbReference type="InterPro" id="IPR000093">
    <property type="entry name" value="DNA_Rcmb_RecR"/>
</dbReference>
<dbReference type="InterPro" id="IPR023627">
    <property type="entry name" value="Rcmb_RecR"/>
</dbReference>
<dbReference type="InterPro" id="IPR015967">
    <property type="entry name" value="Rcmb_RecR_Znf"/>
</dbReference>
<dbReference type="InterPro" id="IPR006171">
    <property type="entry name" value="TOPRIM_dom"/>
</dbReference>
<dbReference type="InterPro" id="IPR034137">
    <property type="entry name" value="TOPRIM_RecR"/>
</dbReference>
<dbReference type="NCBIfam" id="TIGR00615">
    <property type="entry name" value="recR"/>
    <property type="match status" value="1"/>
</dbReference>
<dbReference type="PANTHER" id="PTHR30446">
    <property type="entry name" value="RECOMBINATION PROTEIN RECR"/>
    <property type="match status" value="1"/>
</dbReference>
<dbReference type="PANTHER" id="PTHR30446:SF0">
    <property type="entry name" value="RECOMBINATION PROTEIN RECR"/>
    <property type="match status" value="1"/>
</dbReference>
<dbReference type="Pfam" id="PF21175">
    <property type="entry name" value="RecR_C"/>
    <property type="match status" value="1"/>
</dbReference>
<dbReference type="Pfam" id="PF21176">
    <property type="entry name" value="RecR_HhH"/>
    <property type="match status" value="1"/>
</dbReference>
<dbReference type="Pfam" id="PF02132">
    <property type="entry name" value="RecR_ZnF"/>
    <property type="match status" value="1"/>
</dbReference>
<dbReference type="Pfam" id="PF13662">
    <property type="entry name" value="Toprim_4"/>
    <property type="match status" value="1"/>
</dbReference>
<dbReference type="SMART" id="SM00493">
    <property type="entry name" value="TOPRIM"/>
    <property type="match status" value="1"/>
</dbReference>
<dbReference type="SUPFAM" id="SSF111304">
    <property type="entry name" value="Recombination protein RecR"/>
    <property type="match status" value="1"/>
</dbReference>
<dbReference type="PROSITE" id="PS01300">
    <property type="entry name" value="RECR"/>
    <property type="match status" value="1"/>
</dbReference>
<dbReference type="PROSITE" id="PS50880">
    <property type="entry name" value="TOPRIM"/>
    <property type="match status" value="1"/>
</dbReference>
<comment type="function">
    <text evidence="1">May play a role in DNA repair. It seems to be involved in an RecBC-independent recombinational process of DNA repair. It may act with RecF and RecO.</text>
</comment>
<comment type="similarity">
    <text evidence="1">Belongs to the RecR family.</text>
</comment>
<sequence>MDALSRLVEALRCLPGVGPKSAQRMVFHLLQHQRQRGLHLASCLEQAMKHISHCQQCNNYTEQTLCTLCQNPNRDSTLLCVVESPADVSAIEQSNSFQGKYFVLMGKISPLDGLGPDDIGLPKLKELIIREKIQEVILALSPSVESQTTIHFIHQLLKDETVNISQLAHGIPSGGELEFLDGNTISSALKNRAVINV</sequence>
<protein>
    <recommendedName>
        <fullName evidence="1">Recombination protein RecR</fullName>
    </recommendedName>
</protein>